<accession>Q6AX73</accession>
<dbReference type="EC" id="3.6.1.-" evidence="2"/>
<dbReference type="EMBL" id="BC079727">
    <property type="protein sequence ID" value="AAH79727.1"/>
    <property type="molecule type" value="mRNA"/>
</dbReference>
<dbReference type="RefSeq" id="NP_001087401.1">
    <property type="nucleotide sequence ID" value="NM_001093932.1"/>
</dbReference>
<dbReference type="SMR" id="Q6AX73"/>
<dbReference type="AGR" id="Xenbase:XB-GENE-950537"/>
<dbReference type="Xenbase" id="XB-GENE-950537">
    <property type="gene designation" value="fitm2.L"/>
</dbReference>
<dbReference type="Proteomes" id="UP000186698">
    <property type="component" value="Unplaced"/>
</dbReference>
<dbReference type="Bgee" id="447225">
    <property type="expression patterns" value="Expressed in muscle tissue and 18 other cell types or tissues"/>
</dbReference>
<dbReference type="GO" id="GO:0005789">
    <property type="term" value="C:endoplasmic reticulum membrane"/>
    <property type="evidence" value="ECO:0000318"/>
    <property type="project" value="GO_Central"/>
</dbReference>
<dbReference type="GO" id="GO:0010945">
    <property type="term" value="F:coenzyme A diphosphatase activity"/>
    <property type="evidence" value="ECO:0000250"/>
    <property type="project" value="UniProtKB"/>
</dbReference>
<dbReference type="GO" id="GO:0019992">
    <property type="term" value="F:diacylglycerol binding"/>
    <property type="evidence" value="ECO:0000250"/>
    <property type="project" value="UniProtKB"/>
</dbReference>
<dbReference type="GO" id="GO:0017129">
    <property type="term" value="F:triglyceride binding"/>
    <property type="evidence" value="ECO:0000250"/>
    <property type="project" value="UniProtKB"/>
</dbReference>
<dbReference type="GO" id="GO:0007010">
    <property type="term" value="P:cytoskeleton organization"/>
    <property type="evidence" value="ECO:0000250"/>
    <property type="project" value="UniProtKB"/>
</dbReference>
<dbReference type="GO" id="GO:0036115">
    <property type="term" value="P:fatty-acyl-CoA catabolic process"/>
    <property type="evidence" value="ECO:0000250"/>
    <property type="project" value="UniProtKB"/>
</dbReference>
<dbReference type="GO" id="GO:0140042">
    <property type="term" value="P:lipid droplet formation"/>
    <property type="evidence" value="ECO:0000250"/>
    <property type="project" value="UniProtKB"/>
</dbReference>
<dbReference type="GO" id="GO:0034389">
    <property type="term" value="P:lipid droplet organization"/>
    <property type="evidence" value="ECO:0000318"/>
    <property type="project" value="GO_Central"/>
</dbReference>
<dbReference type="GO" id="GO:0055088">
    <property type="term" value="P:lipid homeostasis"/>
    <property type="evidence" value="ECO:0000250"/>
    <property type="project" value="UniProtKB"/>
</dbReference>
<dbReference type="GO" id="GO:0019915">
    <property type="term" value="P:lipid storage"/>
    <property type="evidence" value="ECO:0000318"/>
    <property type="project" value="GO_Central"/>
</dbReference>
<dbReference type="GO" id="GO:0008654">
    <property type="term" value="P:phospholipid biosynthetic process"/>
    <property type="evidence" value="ECO:0000318"/>
    <property type="project" value="GO_Central"/>
</dbReference>
<dbReference type="GO" id="GO:0022604">
    <property type="term" value="P:regulation of cell morphogenesis"/>
    <property type="evidence" value="ECO:0000250"/>
    <property type="project" value="UniProtKB"/>
</dbReference>
<dbReference type="HAMAP" id="MF_03230">
    <property type="entry name" value="FITM2"/>
    <property type="match status" value="1"/>
</dbReference>
<dbReference type="InterPro" id="IPR019388">
    <property type="entry name" value="FIT"/>
</dbReference>
<dbReference type="InterPro" id="IPR046401">
    <property type="entry name" value="FITM1/2"/>
</dbReference>
<dbReference type="PANTHER" id="PTHR23129">
    <property type="entry name" value="ACYL-COENZYME A DIPHOSPHATASE FITM2"/>
    <property type="match status" value="1"/>
</dbReference>
<dbReference type="PANTHER" id="PTHR23129:SF1">
    <property type="entry name" value="ACYL-COENZYME A DIPHOSPHATASE FITM2"/>
    <property type="match status" value="1"/>
</dbReference>
<dbReference type="Pfam" id="PF10261">
    <property type="entry name" value="FIT"/>
    <property type="match status" value="2"/>
</dbReference>
<evidence type="ECO:0000255" key="1"/>
<evidence type="ECO:0000255" key="2">
    <source>
        <dbReference type="HAMAP-Rule" id="MF_03230"/>
    </source>
</evidence>
<evidence type="ECO:0000305" key="3"/>
<reference key="1">
    <citation type="submission" date="2004-08" db="EMBL/GenBank/DDBJ databases">
        <authorList>
            <consortium name="NIH - Xenopus Gene Collection (XGC) project"/>
        </authorList>
    </citation>
    <scope>NUCLEOTIDE SEQUENCE [LARGE SCALE MRNA]</scope>
    <source>
        <tissue>Kidney</tissue>
    </source>
</reference>
<comment type="function">
    <text evidence="2">Fatty acyl-coenzyme A (CoA) diphosphatase that hydrolyzes fatty acyl-CoA to yield acyl-4'-phosphopantetheine and adenosine 3',5'-bisphosphate (By similarity). Preferentially hydrolyzes unsaturated long-chain acyl-CoA substrates in the endoplasmic reticulum (ER) lumen (By similarity). This catalytic activity is required for maintaining ER structure and for lipid droplets (LDs) biogenesis, which are lipid storage organelles involved in maintaining lipid and energy homeostasis (By similarity). May directly bind to diacylglycerol (DAGs) and triacylglycerol, which is also important for LD biogenesis (By similarity). May support directional budding of nacent LDs from the ER into the cytosol by reducing DAG levels at sites of LD formation (By similarity). May play a role in the regulation of cell morphology, ER morphology and cytoskeletal organization (By similarity).</text>
</comment>
<comment type="catalytic activity">
    <reaction evidence="2">
        <text>an acyl-CoA + H2O = an acyl-4'-phosphopantetheine + adenosine 3',5'-bisphosphate + 2 H(+)</text>
        <dbReference type="Rhea" id="RHEA:50044"/>
        <dbReference type="ChEBI" id="CHEBI:15377"/>
        <dbReference type="ChEBI" id="CHEBI:15378"/>
        <dbReference type="ChEBI" id="CHEBI:58342"/>
        <dbReference type="ChEBI" id="CHEBI:58343"/>
        <dbReference type="ChEBI" id="CHEBI:132023"/>
    </reaction>
    <physiologicalReaction direction="left-to-right" evidence="2">
        <dbReference type="Rhea" id="RHEA:50045"/>
    </physiologicalReaction>
</comment>
<comment type="subcellular location">
    <subcellularLocation>
        <location evidence="2">Endoplasmic reticulum membrane</location>
        <topology evidence="2">Multi-pass membrane protein</topology>
    </subcellularLocation>
</comment>
<comment type="similarity">
    <text evidence="2">Belongs to the FIT family. FIT2 subfamily.</text>
</comment>
<protein>
    <recommendedName>
        <fullName evidence="2">Acyl-coenzyme A diphosphatase FITM2</fullName>
        <ecNumber evidence="2">3.6.1.-</ecNumber>
    </recommendedName>
    <alternativeName>
        <fullName evidence="2">Fat storage-inducing transmembrane protein 2</fullName>
    </alternativeName>
    <alternativeName>
        <fullName evidence="2">Fat-inducing protein 2</fullName>
    </alternativeName>
</protein>
<gene>
    <name evidence="2" type="primary">fitm2</name>
    <name evidence="2" type="synonym">fit2</name>
</gene>
<feature type="chain" id="PRO_0000319572" description="Acyl-coenzyme A diphosphatase FITM2">
    <location>
        <begin position="1"/>
        <end position="260"/>
    </location>
</feature>
<feature type="topological domain" description="Cytoplasmic" evidence="3">
    <location>
        <begin position="1"/>
        <end position="23"/>
    </location>
</feature>
<feature type="transmembrane region" description="Helical" evidence="1">
    <location>
        <begin position="24"/>
        <end position="44"/>
    </location>
</feature>
<feature type="topological domain" description="Lumenal" evidence="3">
    <location>
        <begin position="45"/>
        <end position="57"/>
    </location>
</feature>
<feature type="transmembrane region" description="Helical" evidence="1">
    <location>
        <begin position="58"/>
        <end position="78"/>
    </location>
</feature>
<feature type="topological domain" description="Cytoplasmic" evidence="3">
    <location>
        <begin position="79"/>
        <end position="93"/>
    </location>
</feature>
<feature type="transmembrane region" description="Helical" evidence="1">
    <location>
        <begin position="94"/>
        <end position="114"/>
    </location>
</feature>
<feature type="topological domain" description="Lumenal" evidence="3">
    <location>
        <begin position="115"/>
        <end position="144"/>
    </location>
</feature>
<feature type="transmembrane region" description="Helical" evidence="1">
    <location>
        <begin position="145"/>
        <end position="165"/>
    </location>
</feature>
<feature type="topological domain" description="Cytoplasmic" evidence="3">
    <location>
        <begin position="166"/>
        <end position="189"/>
    </location>
</feature>
<feature type="transmembrane region" description="Helical" evidence="1">
    <location>
        <begin position="190"/>
        <end position="210"/>
    </location>
</feature>
<feature type="transmembrane region" description="Helical" evidence="1">
    <location>
        <begin position="211"/>
        <end position="231"/>
    </location>
</feature>
<feature type="topological domain" description="Cytoplasmic" evidence="3">
    <location>
        <begin position="232"/>
        <end position="260"/>
    </location>
</feature>
<feature type="active site" evidence="2">
    <location>
        <position position="154"/>
    </location>
</feature>
<feature type="active site" evidence="2">
    <location>
        <position position="212"/>
    </location>
</feature>
<name>FITM2_XENLA</name>
<sequence>MERLENCAQMFQRKFLNEAFRRHCPVLLACIALGGSLLKELSPLPDSYWNNKRNVLNVYFVKFCWGWTLWLLLPFITLTNYKLTGSITKVLRRLSSLLVGTLFWYLCTNLFLYIEHITGSCYESEALLDSIEHQDRKECRLHGGFWHGFDISGHCFLLSYCILIILEETSVIRSIQFERHWHRMAINAQFTALSILVIIWVWMFLCTAVYFHNIFQKVIGTAFGMLAWYITYRWWYLQPISPGLPPASASHSEKEPVYKN</sequence>
<proteinExistence type="evidence at transcript level"/>
<organism>
    <name type="scientific">Xenopus laevis</name>
    <name type="common">African clawed frog</name>
    <dbReference type="NCBI Taxonomy" id="8355"/>
    <lineage>
        <taxon>Eukaryota</taxon>
        <taxon>Metazoa</taxon>
        <taxon>Chordata</taxon>
        <taxon>Craniata</taxon>
        <taxon>Vertebrata</taxon>
        <taxon>Euteleostomi</taxon>
        <taxon>Amphibia</taxon>
        <taxon>Batrachia</taxon>
        <taxon>Anura</taxon>
        <taxon>Pipoidea</taxon>
        <taxon>Pipidae</taxon>
        <taxon>Xenopodinae</taxon>
        <taxon>Xenopus</taxon>
        <taxon>Xenopus</taxon>
    </lineage>
</organism>
<keyword id="KW-0256">Endoplasmic reticulum</keyword>
<keyword id="KW-0378">Hydrolase</keyword>
<keyword id="KW-0443">Lipid metabolism</keyword>
<keyword id="KW-0472">Membrane</keyword>
<keyword id="KW-1185">Reference proteome</keyword>
<keyword id="KW-0812">Transmembrane</keyword>
<keyword id="KW-1133">Transmembrane helix</keyword>